<comment type="function">
    <text evidence="1">Involved in the de novo purine biosynthesis. Catalyzes the transfer of formate to 5-phospho-ribosyl-glycinamide (GAR), producing 5-phospho-ribosyl-N-formylglycinamide (FGAR). Formate is provided by PurU via hydrolysis of 10-formyl-tetrahydrofolate.</text>
</comment>
<comment type="catalytic activity">
    <reaction evidence="1">
        <text>N(1)-(5-phospho-beta-D-ribosyl)glycinamide + formate + ATP = N(2)-formyl-N(1)-(5-phospho-beta-D-ribosyl)glycinamide + ADP + phosphate + H(+)</text>
        <dbReference type="Rhea" id="RHEA:24829"/>
        <dbReference type="ChEBI" id="CHEBI:15378"/>
        <dbReference type="ChEBI" id="CHEBI:15740"/>
        <dbReference type="ChEBI" id="CHEBI:30616"/>
        <dbReference type="ChEBI" id="CHEBI:43474"/>
        <dbReference type="ChEBI" id="CHEBI:143788"/>
        <dbReference type="ChEBI" id="CHEBI:147286"/>
        <dbReference type="ChEBI" id="CHEBI:456216"/>
        <dbReference type="EC" id="6.3.1.21"/>
    </reaction>
    <physiologicalReaction direction="left-to-right" evidence="1">
        <dbReference type="Rhea" id="RHEA:24830"/>
    </physiologicalReaction>
</comment>
<comment type="pathway">
    <text evidence="1">Purine metabolism; IMP biosynthesis via de novo pathway; N(2)-formyl-N(1)-(5-phospho-D-ribosyl)glycinamide from N(1)-(5-phospho-D-ribosyl)glycinamide (formate route): step 1/1.</text>
</comment>
<comment type="subunit">
    <text evidence="1">Homodimer.</text>
</comment>
<comment type="similarity">
    <text evidence="1">Belongs to the PurK/PurT family.</text>
</comment>
<organism>
    <name type="scientific">Nostoc sp. (strain PCC 7120 / SAG 25.82 / UTEX 2576)</name>
    <dbReference type="NCBI Taxonomy" id="103690"/>
    <lineage>
        <taxon>Bacteria</taxon>
        <taxon>Bacillati</taxon>
        <taxon>Cyanobacteriota</taxon>
        <taxon>Cyanophyceae</taxon>
        <taxon>Nostocales</taxon>
        <taxon>Nostocaceae</taxon>
        <taxon>Nostoc</taxon>
    </lineage>
</organism>
<reference key="1">
    <citation type="journal article" date="2001" name="DNA Res.">
        <title>Complete genomic sequence of the filamentous nitrogen-fixing cyanobacterium Anabaena sp. strain PCC 7120.</title>
        <authorList>
            <person name="Kaneko T."/>
            <person name="Nakamura Y."/>
            <person name="Wolk C.P."/>
            <person name="Kuritz T."/>
            <person name="Sasamoto S."/>
            <person name="Watanabe A."/>
            <person name="Iriguchi M."/>
            <person name="Ishikawa A."/>
            <person name="Kawashima K."/>
            <person name="Kimura T."/>
            <person name="Kishida Y."/>
            <person name="Kohara M."/>
            <person name="Matsumoto M."/>
            <person name="Matsuno A."/>
            <person name="Muraki A."/>
            <person name="Nakazaki N."/>
            <person name="Shimpo S."/>
            <person name="Sugimoto M."/>
            <person name="Takazawa M."/>
            <person name="Yamada M."/>
            <person name="Yasuda M."/>
            <person name="Tabata S."/>
        </authorList>
    </citation>
    <scope>NUCLEOTIDE SEQUENCE [LARGE SCALE GENOMIC DNA]</scope>
    <source>
        <strain>PCC 7120 / SAG 25.82 / UTEX 2576</strain>
    </source>
</reference>
<keyword id="KW-0067">ATP-binding</keyword>
<keyword id="KW-0436">Ligase</keyword>
<keyword id="KW-0460">Magnesium</keyword>
<keyword id="KW-0479">Metal-binding</keyword>
<keyword id="KW-0547">Nucleotide-binding</keyword>
<keyword id="KW-0658">Purine biosynthesis</keyword>
<keyword id="KW-1185">Reference proteome</keyword>
<evidence type="ECO:0000255" key="1">
    <source>
        <dbReference type="HAMAP-Rule" id="MF_01643"/>
    </source>
</evidence>
<name>PURT_NOSS1</name>
<feature type="chain" id="PRO_0000319119" description="Formate-dependent phosphoribosylglycinamide formyltransferase">
    <location>
        <begin position="1"/>
        <end position="391"/>
    </location>
</feature>
<feature type="domain" description="ATP-grasp" evidence="1">
    <location>
        <begin position="115"/>
        <end position="305"/>
    </location>
</feature>
<feature type="binding site" evidence="1">
    <location>
        <begin position="18"/>
        <end position="19"/>
    </location>
    <ligand>
        <name>N(1)-(5-phospho-beta-D-ribosyl)glycinamide</name>
        <dbReference type="ChEBI" id="CHEBI:143788"/>
    </ligand>
</feature>
<feature type="binding site" evidence="1">
    <location>
        <position position="78"/>
    </location>
    <ligand>
        <name>N(1)-(5-phospho-beta-D-ribosyl)glycinamide</name>
        <dbReference type="ChEBI" id="CHEBI:143788"/>
    </ligand>
</feature>
<feature type="binding site" evidence="1">
    <location>
        <position position="110"/>
    </location>
    <ligand>
        <name>ATP</name>
        <dbReference type="ChEBI" id="CHEBI:30616"/>
    </ligand>
</feature>
<feature type="binding site" evidence="1">
    <location>
        <position position="151"/>
    </location>
    <ligand>
        <name>ATP</name>
        <dbReference type="ChEBI" id="CHEBI:30616"/>
    </ligand>
</feature>
<feature type="binding site" evidence="1">
    <location>
        <begin position="156"/>
        <end position="161"/>
    </location>
    <ligand>
        <name>ATP</name>
        <dbReference type="ChEBI" id="CHEBI:30616"/>
    </ligand>
</feature>
<feature type="binding site" evidence="1">
    <location>
        <begin position="191"/>
        <end position="194"/>
    </location>
    <ligand>
        <name>ATP</name>
        <dbReference type="ChEBI" id="CHEBI:30616"/>
    </ligand>
</feature>
<feature type="binding site" evidence="1">
    <location>
        <position position="199"/>
    </location>
    <ligand>
        <name>ATP</name>
        <dbReference type="ChEBI" id="CHEBI:30616"/>
    </ligand>
</feature>
<feature type="binding site" evidence="1">
    <location>
        <position position="264"/>
    </location>
    <ligand>
        <name>Mg(2+)</name>
        <dbReference type="ChEBI" id="CHEBI:18420"/>
    </ligand>
</feature>
<feature type="binding site" evidence="1">
    <location>
        <position position="276"/>
    </location>
    <ligand>
        <name>Mg(2+)</name>
        <dbReference type="ChEBI" id="CHEBI:18420"/>
    </ligand>
</feature>
<feature type="binding site" evidence="1">
    <location>
        <position position="283"/>
    </location>
    <ligand>
        <name>N(1)-(5-phospho-beta-D-ribosyl)glycinamide</name>
        <dbReference type="ChEBI" id="CHEBI:143788"/>
    </ligand>
</feature>
<feature type="binding site" evidence="1">
    <location>
        <position position="353"/>
    </location>
    <ligand>
        <name>N(1)-(5-phospho-beta-D-ribosyl)glycinamide</name>
        <dbReference type="ChEBI" id="CHEBI:143788"/>
    </ligand>
</feature>
<feature type="binding site" evidence="1">
    <location>
        <begin position="360"/>
        <end position="361"/>
    </location>
    <ligand>
        <name>N(1)-(5-phospho-beta-D-ribosyl)glycinamide</name>
        <dbReference type="ChEBI" id="CHEBI:143788"/>
    </ligand>
</feature>
<dbReference type="EC" id="6.3.1.21" evidence="1"/>
<dbReference type="EMBL" id="BA000019">
    <property type="protein sequence ID" value="BAB73256.1"/>
    <property type="molecule type" value="Genomic_DNA"/>
</dbReference>
<dbReference type="PIR" id="AH1968">
    <property type="entry name" value="AH1968"/>
</dbReference>
<dbReference type="RefSeq" id="WP_010995471.1">
    <property type="nucleotide sequence ID" value="NZ_RSCN01000021.1"/>
</dbReference>
<dbReference type="SMR" id="Q8YXB6"/>
<dbReference type="STRING" id="103690.gene:10493313"/>
<dbReference type="KEGG" id="ana:alr1299"/>
<dbReference type="eggNOG" id="COG0027">
    <property type="taxonomic scope" value="Bacteria"/>
</dbReference>
<dbReference type="OrthoDB" id="9804625at2"/>
<dbReference type="UniPathway" id="UPA00074">
    <property type="reaction ID" value="UER00127"/>
</dbReference>
<dbReference type="Proteomes" id="UP000002483">
    <property type="component" value="Chromosome"/>
</dbReference>
<dbReference type="GO" id="GO:0005829">
    <property type="term" value="C:cytosol"/>
    <property type="evidence" value="ECO:0007669"/>
    <property type="project" value="TreeGrafter"/>
</dbReference>
<dbReference type="GO" id="GO:0005524">
    <property type="term" value="F:ATP binding"/>
    <property type="evidence" value="ECO:0007669"/>
    <property type="project" value="UniProtKB-UniRule"/>
</dbReference>
<dbReference type="GO" id="GO:0000287">
    <property type="term" value="F:magnesium ion binding"/>
    <property type="evidence" value="ECO:0007669"/>
    <property type="project" value="InterPro"/>
</dbReference>
<dbReference type="GO" id="GO:0043815">
    <property type="term" value="F:phosphoribosylglycinamide formyltransferase 2 activity"/>
    <property type="evidence" value="ECO:0007669"/>
    <property type="project" value="UniProtKB-UniRule"/>
</dbReference>
<dbReference type="GO" id="GO:0004644">
    <property type="term" value="F:phosphoribosylglycinamide formyltransferase activity"/>
    <property type="evidence" value="ECO:0007669"/>
    <property type="project" value="InterPro"/>
</dbReference>
<dbReference type="GO" id="GO:0006189">
    <property type="term" value="P:'de novo' IMP biosynthetic process"/>
    <property type="evidence" value="ECO:0007669"/>
    <property type="project" value="UniProtKB-UniRule"/>
</dbReference>
<dbReference type="FunFam" id="3.40.50.20:FF:000022">
    <property type="entry name" value="Formate-dependent phosphoribosylglycinamide formyltransferase"/>
    <property type="match status" value="1"/>
</dbReference>
<dbReference type="Gene3D" id="3.40.50.20">
    <property type="match status" value="1"/>
</dbReference>
<dbReference type="Gene3D" id="3.30.1490.20">
    <property type="entry name" value="ATP-grasp fold, A domain"/>
    <property type="match status" value="1"/>
</dbReference>
<dbReference type="Gene3D" id="3.30.470.20">
    <property type="entry name" value="ATP-grasp fold, B domain"/>
    <property type="match status" value="1"/>
</dbReference>
<dbReference type="HAMAP" id="MF_01643">
    <property type="entry name" value="PurT"/>
    <property type="match status" value="1"/>
</dbReference>
<dbReference type="InterPro" id="IPR011761">
    <property type="entry name" value="ATP-grasp"/>
</dbReference>
<dbReference type="InterPro" id="IPR003135">
    <property type="entry name" value="ATP-grasp_carboxylate-amine"/>
</dbReference>
<dbReference type="InterPro" id="IPR013815">
    <property type="entry name" value="ATP_grasp_subdomain_1"/>
</dbReference>
<dbReference type="InterPro" id="IPR016185">
    <property type="entry name" value="PreATP-grasp_dom_sf"/>
</dbReference>
<dbReference type="InterPro" id="IPR005862">
    <property type="entry name" value="PurT"/>
</dbReference>
<dbReference type="InterPro" id="IPR054350">
    <property type="entry name" value="PurT/PurK_preATP-grasp"/>
</dbReference>
<dbReference type="InterPro" id="IPR048740">
    <property type="entry name" value="PurT_C"/>
</dbReference>
<dbReference type="InterPro" id="IPR011054">
    <property type="entry name" value="Rudment_hybrid_motif"/>
</dbReference>
<dbReference type="NCBIfam" id="NF006766">
    <property type="entry name" value="PRK09288.1"/>
    <property type="match status" value="1"/>
</dbReference>
<dbReference type="NCBIfam" id="TIGR01142">
    <property type="entry name" value="purT"/>
    <property type="match status" value="1"/>
</dbReference>
<dbReference type="PANTHER" id="PTHR43055">
    <property type="entry name" value="FORMATE-DEPENDENT PHOSPHORIBOSYLGLYCINAMIDE FORMYLTRANSFERASE"/>
    <property type="match status" value="1"/>
</dbReference>
<dbReference type="PANTHER" id="PTHR43055:SF1">
    <property type="entry name" value="FORMATE-DEPENDENT PHOSPHORIBOSYLGLYCINAMIDE FORMYLTRANSFERASE"/>
    <property type="match status" value="1"/>
</dbReference>
<dbReference type="Pfam" id="PF02222">
    <property type="entry name" value="ATP-grasp"/>
    <property type="match status" value="1"/>
</dbReference>
<dbReference type="Pfam" id="PF21244">
    <property type="entry name" value="PurT_C"/>
    <property type="match status" value="1"/>
</dbReference>
<dbReference type="Pfam" id="PF22660">
    <property type="entry name" value="RS_preATP-grasp-like"/>
    <property type="match status" value="1"/>
</dbReference>
<dbReference type="SUPFAM" id="SSF56059">
    <property type="entry name" value="Glutathione synthetase ATP-binding domain-like"/>
    <property type="match status" value="1"/>
</dbReference>
<dbReference type="SUPFAM" id="SSF52440">
    <property type="entry name" value="PreATP-grasp domain"/>
    <property type="match status" value="1"/>
</dbReference>
<dbReference type="SUPFAM" id="SSF51246">
    <property type="entry name" value="Rudiment single hybrid motif"/>
    <property type="match status" value="1"/>
</dbReference>
<dbReference type="PROSITE" id="PS50975">
    <property type="entry name" value="ATP_GRASP"/>
    <property type="match status" value="1"/>
</dbReference>
<protein>
    <recommendedName>
        <fullName evidence="1">Formate-dependent phosphoribosylglycinamide formyltransferase</fullName>
        <ecNumber evidence="1">6.3.1.21</ecNumber>
    </recommendedName>
    <alternativeName>
        <fullName evidence="1">5'-phosphoribosylglycinamide transformylase 2</fullName>
    </alternativeName>
    <alternativeName>
        <fullName evidence="1">Formate-dependent GAR transformylase</fullName>
    </alternativeName>
    <alternativeName>
        <fullName evidence="1">GAR transformylase 2</fullName>
        <shortName evidence="1">GART 2</shortName>
    </alternativeName>
    <alternativeName>
        <fullName evidence="1">Non-folate glycinamide ribonucleotide transformylase</fullName>
    </alternativeName>
    <alternativeName>
        <fullName evidence="1">Phosphoribosylglycinamide formyltransferase 2</fullName>
    </alternativeName>
</protein>
<sequence length="391" mass="42898">MSKAIKLPQKLMLLGSGELGKEFVIAAQRLGNYVIAVDRYANAPAMQVSDCCEVISMLSADDLEAVVTKYEPDFIIPEIEAIRTEKLQEFEDRGITVIPTAAATNYTMNRDRIRELAHEELGIRTAKYGYAVTLEELIAVSDNIGFPNVVKPVMSSSGKGQSVVATKEEVEKAWDYAIANSRGDSQKVIVEEFINFEIEITLLTIKQWNAPTIFCSPIGHRQERGDYQESWQPAGISEDKILEAQAIAKTVTDALGGAGIFGVEFFITKDEVIFSELSPRPHDTGMVTLISQNLNEFELHLRAILGLPIPKIEQLGFCASAVILASEKLDAPLFTGVAEALAEPDVDIRLFGKPTAHPYRRMGVALAKAENVETAREKATDAASKIHISSQ</sequence>
<gene>
    <name evidence="1" type="primary">purT</name>
    <name type="ordered locus">alr1299</name>
</gene>
<proteinExistence type="inferred from homology"/>
<accession>Q8YXB6</accession>